<comment type="function">
    <text evidence="1">Protein S19 forms a complex with S13 that binds strongly to the 16S ribosomal RNA.</text>
</comment>
<comment type="similarity">
    <text evidence="1">Belongs to the universal ribosomal protein uS19 family.</text>
</comment>
<proteinExistence type="evidence at protein level"/>
<protein>
    <recommendedName>
        <fullName evidence="1">Small ribosomal subunit protein uS19</fullName>
    </recommendedName>
    <alternativeName>
        <fullName evidence="2">30S ribosomal protein S19</fullName>
    </alternativeName>
</protein>
<reference key="1">
    <citation type="journal article" date="2001" name="Lancet">
        <title>Whole genome sequencing of meticillin-resistant Staphylococcus aureus.</title>
        <authorList>
            <person name="Kuroda M."/>
            <person name="Ohta T."/>
            <person name="Uchiyama I."/>
            <person name="Baba T."/>
            <person name="Yuzawa H."/>
            <person name="Kobayashi I."/>
            <person name="Cui L."/>
            <person name="Oguchi A."/>
            <person name="Aoki K."/>
            <person name="Nagai Y."/>
            <person name="Lian J.-Q."/>
            <person name="Ito T."/>
            <person name="Kanamori M."/>
            <person name="Matsumaru H."/>
            <person name="Maruyama A."/>
            <person name="Murakami H."/>
            <person name="Hosoyama A."/>
            <person name="Mizutani-Ui Y."/>
            <person name="Takahashi N.K."/>
            <person name="Sawano T."/>
            <person name="Inoue R."/>
            <person name="Kaito C."/>
            <person name="Sekimizu K."/>
            <person name="Hirakawa H."/>
            <person name="Kuhara S."/>
            <person name="Goto S."/>
            <person name="Yabuzaki J."/>
            <person name="Kanehisa M."/>
            <person name="Yamashita A."/>
            <person name="Oshima K."/>
            <person name="Furuya K."/>
            <person name="Yoshino C."/>
            <person name="Shiba T."/>
            <person name="Hattori M."/>
            <person name="Ogasawara N."/>
            <person name="Hayashi H."/>
            <person name="Hiramatsu K."/>
        </authorList>
    </citation>
    <scope>NUCLEOTIDE SEQUENCE [LARGE SCALE GENOMIC DNA]</scope>
    <source>
        <strain>N315</strain>
    </source>
</reference>
<reference key="2">
    <citation type="submission" date="2005-11" db="UniProtKB">
        <title>Shotgun proteomic analysis of total protein extract of S. aureus S30 versus N315.</title>
        <authorList>
            <person name="Stenz L."/>
        </authorList>
    </citation>
    <scope>IDENTIFICATION BY MASS SPECTROMETRY</scope>
</reference>
<reference key="3">
    <citation type="submission" date="2007-10" db="UniProtKB">
        <title>Shotgun proteomic analysis of total and membrane protein extracts of S. aureus strain N315.</title>
        <authorList>
            <person name="Vaezzadeh A.R."/>
            <person name="Deshusses J."/>
            <person name="Lescuyer P."/>
            <person name="Hochstrasser D.F."/>
        </authorList>
    </citation>
    <scope>IDENTIFICATION BY MASS SPECTROMETRY [LARGE SCALE ANALYSIS]</scope>
    <source>
        <strain>N315</strain>
    </source>
</reference>
<gene>
    <name evidence="1" type="primary">rpsS</name>
    <name type="ordered locus">SA2043</name>
</gene>
<sequence length="92" mass="10615">MARSIKKGPFVDEHLMKKVEAQEGSEKKQVIKTWSRRSTIFPNFIGHTFAVYDGRKHVPVYVTEDMVGHKLGEFAPTRTFKGHVADDKKTRR</sequence>
<evidence type="ECO:0000255" key="1">
    <source>
        <dbReference type="HAMAP-Rule" id="MF_00531"/>
    </source>
</evidence>
<evidence type="ECO:0000305" key="2"/>
<dbReference type="EMBL" id="BA000018">
    <property type="protein sequence ID" value="BAB43338.1"/>
    <property type="molecule type" value="Genomic_DNA"/>
</dbReference>
<dbReference type="PIR" id="A90022">
    <property type="entry name" value="A90022"/>
</dbReference>
<dbReference type="RefSeq" id="WP_000124353.1">
    <property type="nucleotide sequence ID" value="NC_002745.2"/>
</dbReference>
<dbReference type="SMR" id="P66494"/>
<dbReference type="EnsemblBacteria" id="BAB43338">
    <property type="protein sequence ID" value="BAB43338"/>
    <property type="gene ID" value="BAB43338"/>
</dbReference>
<dbReference type="GeneID" id="98346558"/>
<dbReference type="KEGG" id="sau:SA2043"/>
<dbReference type="HOGENOM" id="CLU_144911_0_1_9"/>
<dbReference type="GO" id="GO:0005737">
    <property type="term" value="C:cytoplasm"/>
    <property type="evidence" value="ECO:0007669"/>
    <property type="project" value="UniProtKB-ARBA"/>
</dbReference>
<dbReference type="GO" id="GO:0015935">
    <property type="term" value="C:small ribosomal subunit"/>
    <property type="evidence" value="ECO:0007669"/>
    <property type="project" value="InterPro"/>
</dbReference>
<dbReference type="GO" id="GO:0019843">
    <property type="term" value="F:rRNA binding"/>
    <property type="evidence" value="ECO:0007669"/>
    <property type="project" value="UniProtKB-UniRule"/>
</dbReference>
<dbReference type="GO" id="GO:0003735">
    <property type="term" value="F:structural constituent of ribosome"/>
    <property type="evidence" value="ECO:0007669"/>
    <property type="project" value="InterPro"/>
</dbReference>
<dbReference type="GO" id="GO:0000028">
    <property type="term" value="P:ribosomal small subunit assembly"/>
    <property type="evidence" value="ECO:0007669"/>
    <property type="project" value="TreeGrafter"/>
</dbReference>
<dbReference type="GO" id="GO:0006412">
    <property type="term" value="P:translation"/>
    <property type="evidence" value="ECO:0007669"/>
    <property type="project" value="UniProtKB-UniRule"/>
</dbReference>
<dbReference type="FunFam" id="3.30.860.10:FF:000001">
    <property type="entry name" value="30S ribosomal protein S19"/>
    <property type="match status" value="1"/>
</dbReference>
<dbReference type="Gene3D" id="3.30.860.10">
    <property type="entry name" value="30s Ribosomal Protein S19, Chain A"/>
    <property type="match status" value="1"/>
</dbReference>
<dbReference type="HAMAP" id="MF_00531">
    <property type="entry name" value="Ribosomal_uS19"/>
    <property type="match status" value="1"/>
</dbReference>
<dbReference type="InterPro" id="IPR002222">
    <property type="entry name" value="Ribosomal_uS19"/>
</dbReference>
<dbReference type="InterPro" id="IPR005732">
    <property type="entry name" value="Ribosomal_uS19_bac-type"/>
</dbReference>
<dbReference type="InterPro" id="IPR020934">
    <property type="entry name" value="Ribosomal_uS19_CS"/>
</dbReference>
<dbReference type="InterPro" id="IPR023575">
    <property type="entry name" value="Ribosomal_uS19_SF"/>
</dbReference>
<dbReference type="NCBIfam" id="TIGR01050">
    <property type="entry name" value="rpsS_bact"/>
    <property type="match status" value="1"/>
</dbReference>
<dbReference type="PANTHER" id="PTHR11880">
    <property type="entry name" value="RIBOSOMAL PROTEIN S19P FAMILY MEMBER"/>
    <property type="match status" value="1"/>
</dbReference>
<dbReference type="PANTHER" id="PTHR11880:SF8">
    <property type="entry name" value="SMALL RIBOSOMAL SUBUNIT PROTEIN US19M"/>
    <property type="match status" value="1"/>
</dbReference>
<dbReference type="Pfam" id="PF00203">
    <property type="entry name" value="Ribosomal_S19"/>
    <property type="match status" value="1"/>
</dbReference>
<dbReference type="PIRSF" id="PIRSF002144">
    <property type="entry name" value="Ribosomal_S19"/>
    <property type="match status" value="1"/>
</dbReference>
<dbReference type="PRINTS" id="PR00975">
    <property type="entry name" value="RIBOSOMALS19"/>
</dbReference>
<dbReference type="SUPFAM" id="SSF54570">
    <property type="entry name" value="Ribosomal protein S19"/>
    <property type="match status" value="1"/>
</dbReference>
<dbReference type="PROSITE" id="PS00323">
    <property type="entry name" value="RIBOSOMAL_S19"/>
    <property type="match status" value="1"/>
</dbReference>
<name>RS19_STAAN</name>
<feature type="chain" id="PRO_0000129901" description="Small ribosomal subunit protein uS19">
    <location>
        <begin position="1"/>
        <end position="92"/>
    </location>
</feature>
<organism>
    <name type="scientific">Staphylococcus aureus (strain N315)</name>
    <dbReference type="NCBI Taxonomy" id="158879"/>
    <lineage>
        <taxon>Bacteria</taxon>
        <taxon>Bacillati</taxon>
        <taxon>Bacillota</taxon>
        <taxon>Bacilli</taxon>
        <taxon>Bacillales</taxon>
        <taxon>Staphylococcaceae</taxon>
        <taxon>Staphylococcus</taxon>
    </lineage>
</organism>
<accession>P66494</accession>
<accession>Q99S25</accession>
<keyword id="KW-0687">Ribonucleoprotein</keyword>
<keyword id="KW-0689">Ribosomal protein</keyword>
<keyword id="KW-0694">RNA-binding</keyword>
<keyword id="KW-0699">rRNA-binding</keyword>